<evidence type="ECO:0000255" key="1">
    <source>
        <dbReference type="HAMAP-Rule" id="MF_00201"/>
    </source>
</evidence>
<feature type="chain" id="PRO_0000227045" description="DNA repair protein RecO">
    <location>
        <begin position="1"/>
        <end position="246"/>
    </location>
</feature>
<reference key="1">
    <citation type="journal article" date="2006" name="Appl. Environ. Microbiol.">
        <title>Complete genome sequence of the marine, chemolithoautotrophic, ammonia-oxidizing bacterium Nitrosococcus oceani ATCC 19707.</title>
        <authorList>
            <person name="Klotz M.G."/>
            <person name="Arp D.J."/>
            <person name="Chain P.S.G."/>
            <person name="El-Sheikh A.F."/>
            <person name="Hauser L.J."/>
            <person name="Hommes N.G."/>
            <person name="Larimer F.W."/>
            <person name="Malfatti S.A."/>
            <person name="Norton J.M."/>
            <person name="Poret-Peterson A.T."/>
            <person name="Vergez L.M."/>
            <person name="Ward B.B."/>
        </authorList>
    </citation>
    <scope>NUCLEOTIDE SEQUENCE [LARGE SCALE GENOMIC DNA]</scope>
    <source>
        <strain>ATCC 19707 / BCRC 17464 / JCM 30415 / NCIMB 11848 / C-107</strain>
    </source>
</reference>
<name>RECO_NITOC</name>
<proteinExistence type="inferred from homology"/>
<keyword id="KW-0227">DNA damage</keyword>
<keyword id="KW-0233">DNA recombination</keyword>
<keyword id="KW-0234">DNA repair</keyword>
<keyword id="KW-1185">Reference proteome</keyword>
<accession>Q3JCY9</accession>
<protein>
    <recommendedName>
        <fullName evidence="1">DNA repair protein RecO</fullName>
    </recommendedName>
    <alternativeName>
        <fullName evidence="1">Recombination protein O</fullName>
    </alternativeName>
</protein>
<dbReference type="EMBL" id="CP000127">
    <property type="protein sequence ID" value="ABA57307.1"/>
    <property type="molecule type" value="Genomic_DNA"/>
</dbReference>
<dbReference type="RefSeq" id="WP_002811352.1">
    <property type="nucleotide sequence ID" value="NC_007484.1"/>
</dbReference>
<dbReference type="SMR" id="Q3JCY9"/>
<dbReference type="FunCoup" id="Q3JCY9">
    <property type="interactions" value="61"/>
</dbReference>
<dbReference type="STRING" id="323261.Noc_0794"/>
<dbReference type="KEGG" id="noc:Noc_0794"/>
<dbReference type="eggNOG" id="COG1381">
    <property type="taxonomic scope" value="Bacteria"/>
</dbReference>
<dbReference type="HOGENOM" id="CLU_066645_1_0_6"/>
<dbReference type="InParanoid" id="Q3JCY9"/>
<dbReference type="Proteomes" id="UP000006838">
    <property type="component" value="Chromosome"/>
</dbReference>
<dbReference type="GO" id="GO:0043590">
    <property type="term" value="C:bacterial nucleoid"/>
    <property type="evidence" value="ECO:0007669"/>
    <property type="project" value="TreeGrafter"/>
</dbReference>
<dbReference type="GO" id="GO:0006310">
    <property type="term" value="P:DNA recombination"/>
    <property type="evidence" value="ECO:0007669"/>
    <property type="project" value="UniProtKB-UniRule"/>
</dbReference>
<dbReference type="GO" id="GO:0006302">
    <property type="term" value="P:double-strand break repair"/>
    <property type="evidence" value="ECO:0007669"/>
    <property type="project" value="TreeGrafter"/>
</dbReference>
<dbReference type="Gene3D" id="2.40.50.140">
    <property type="entry name" value="Nucleic acid-binding proteins"/>
    <property type="match status" value="1"/>
</dbReference>
<dbReference type="Gene3D" id="1.20.1440.120">
    <property type="entry name" value="Recombination protein O, C-terminal domain"/>
    <property type="match status" value="1"/>
</dbReference>
<dbReference type="HAMAP" id="MF_00201">
    <property type="entry name" value="RecO"/>
    <property type="match status" value="1"/>
</dbReference>
<dbReference type="InterPro" id="IPR037278">
    <property type="entry name" value="ARFGAP/RecO"/>
</dbReference>
<dbReference type="InterPro" id="IPR022572">
    <property type="entry name" value="DNA_rep/recomb_RecO_N"/>
</dbReference>
<dbReference type="InterPro" id="IPR012340">
    <property type="entry name" value="NA-bd_OB-fold"/>
</dbReference>
<dbReference type="InterPro" id="IPR003717">
    <property type="entry name" value="RecO"/>
</dbReference>
<dbReference type="InterPro" id="IPR042242">
    <property type="entry name" value="RecO_C"/>
</dbReference>
<dbReference type="NCBIfam" id="TIGR00613">
    <property type="entry name" value="reco"/>
    <property type="match status" value="1"/>
</dbReference>
<dbReference type="PANTHER" id="PTHR33991">
    <property type="entry name" value="DNA REPAIR PROTEIN RECO"/>
    <property type="match status" value="1"/>
</dbReference>
<dbReference type="PANTHER" id="PTHR33991:SF1">
    <property type="entry name" value="DNA REPAIR PROTEIN RECO"/>
    <property type="match status" value="1"/>
</dbReference>
<dbReference type="Pfam" id="PF02565">
    <property type="entry name" value="RecO_C"/>
    <property type="match status" value="1"/>
</dbReference>
<dbReference type="Pfam" id="PF11967">
    <property type="entry name" value="RecO_N"/>
    <property type="match status" value="1"/>
</dbReference>
<dbReference type="SUPFAM" id="SSF57863">
    <property type="entry name" value="ArfGap/RecO-like zinc finger"/>
    <property type="match status" value="1"/>
</dbReference>
<dbReference type="SUPFAM" id="SSF50249">
    <property type="entry name" value="Nucleic acid-binding proteins"/>
    <property type="match status" value="1"/>
</dbReference>
<gene>
    <name evidence="1" type="primary">recO</name>
    <name type="ordered locus">Noc_0794</name>
</gene>
<sequence>MRVVLQPAYVLHSRPYRETSALVEVFTPEYGRVGLVAKGVKRQRTHRFSLLQPFCPLLLSWTGRGDLVTLTGAEAAGPIPVLTGEGLICAFYLNELLLRLLPRRDPLEALFSVYAHSLPSLIHAQQRQQILRLFERDLLAYLGYGLILKYEAGTSRPIEAGQWYSYQLEKGPVRLLSEDLEGMKVRGHTLQALARGALADPASLGEAKRLLRWLLAFHLGDKPLKSRGLLEELRRLGNVSRKEERP</sequence>
<organism>
    <name type="scientific">Nitrosococcus oceani (strain ATCC 19707 / BCRC 17464 / JCM 30415 / NCIMB 11848 / C-107)</name>
    <dbReference type="NCBI Taxonomy" id="323261"/>
    <lineage>
        <taxon>Bacteria</taxon>
        <taxon>Pseudomonadati</taxon>
        <taxon>Pseudomonadota</taxon>
        <taxon>Gammaproteobacteria</taxon>
        <taxon>Chromatiales</taxon>
        <taxon>Chromatiaceae</taxon>
        <taxon>Nitrosococcus</taxon>
    </lineage>
</organism>
<comment type="function">
    <text evidence="1">Involved in DNA repair and RecF pathway recombination.</text>
</comment>
<comment type="similarity">
    <text evidence="1">Belongs to the RecO family.</text>
</comment>